<dbReference type="EC" id="3.1.26.3" evidence="1"/>
<dbReference type="EMBL" id="LT708304">
    <property type="protein sequence ID" value="SIU01571.1"/>
    <property type="molecule type" value="Genomic_DNA"/>
</dbReference>
<dbReference type="RefSeq" id="NP_856595.1">
    <property type="nucleotide sequence ID" value="NC_002945.3"/>
</dbReference>
<dbReference type="RefSeq" id="WP_003414820.1">
    <property type="nucleotide sequence ID" value="NC_002945.4"/>
</dbReference>
<dbReference type="SMR" id="P66667"/>
<dbReference type="GeneID" id="45426913"/>
<dbReference type="KEGG" id="mbo:BQ2027_MB2950C"/>
<dbReference type="PATRIC" id="fig|233413.5.peg.3237"/>
<dbReference type="Proteomes" id="UP000001419">
    <property type="component" value="Chromosome"/>
</dbReference>
<dbReference type="GO" id="GO:0005737">
    <property type="term" value="C:cytoplasm"/>
    <property type="evidence" value="ECO:0007669"/>
    <property type="project" value="UniProtKB-SubCell"/>
</dbReference>
<dbReference type="GO" id="GO:0003725">
    <property type="term" value="F:double-stranded RNA binding"/>
    <property type="evidence" value="ECO:0007669"/>
    <property type="project" value="TreeGrafter"/>
</dbReference>
<dbReference type="GO" id="GO:0046872">
    <property type="term" value="F:metal ion binding"/>
    <property type="evidence" value="ECO:0007669"/>
    <property type="project" value="UniProtKB-KW"/>
</dbReference>
<dbReference type="GO" id="GO:0004525">
    <property type="term" value="F:ribonuclease III activity"/>
    <property type="evidence" value="ECO:0007669"/>
    <property type="project" value="UniProtKB-UniRule"/>
</dbReference>
<dbReference type="GO" id="GO:0019843">
    <property type="term" value="F:rRNA binding"/>
    <property type="evidence" value="ECO:0007669"/>
    <property type="project" value="UniProtKB-KW"/>
</dbReference>
<dbReference type="GO" id="GO:0006397">
    <property type="term" value="P:mRNA processing"/>
    <property type="evidence" value="ECO:0007669"/>
    <property type="project" value="UniProtKB-UniRule"/>
</dbReference>
<dbReference type="GO" id="GO:0010468">
    <property type="term" value="P:regulation of gene expression"/>
    <property type="evidence" value="ECO:0007669"/>
    <property type="project" value="TreeGrafter"/>
</dbReference>
<dbReference type="GO" id="GO:0006364">
    <property type="term" value="P:rRNA processing"/>
    <property type="evidence" value="ECO:0007669"/>
    <property type="project" value="UniProtKB-UniRule"/>
</dbReference>
<dbReference type="GO" id="GO:0008033">
    <property type="term" value="P:tRNA processing"/>
    <property type="evidence" value="ECO:0007669"/>
    <property type="project" value="UniProtKB-KW"/>
</dbReference>
<dbReference type="CDD" id="cd10845">
    <property type="entry name" value="DSRM_RNAse_III_family"/>
    <property type="match status" value="1"/>
</dbReference>
<dbReference type="CDD" id="cd00593">
    <property type="entry name" value="RIBOc"/>
    <property type="match status" value="1"/>
</dbReference>
<dbReference type="FunFam" id="1.10.1520.10:FF:000001">
    <property type="entry name" value="Ribonuclease 3"/>
    <property type="match status" value="1"/>
</dbReference>
<dbReference type="FunFam" id="3.30.160.20:FF:000003">
    <property type="entry name" value="Ribonuclease 3"/>
    <property type="match status" value="1"/>
</dbReference>
<dbReference type="Gene3D" id="3.30.160.20">
    <property type="match status" value="1"/>
</dbReference>
<dbReference type="Gene3D" id="1.10.1520.10">
    <property type="entry name" value="Ribonuclease III domain"/>
    <property type="match status" value="1"/>
</dbReference>
<dbReference type="HAMAP" id="MF_00104">
    <property type="entry name" value="RNase_III"/>
    <property type="match status" value="1"/>
</dbReference>
<dbReference type="InterPro" id="IPR014720">
    <property type="entry name" value="dsRBD_dom"/>
</dbReference>
<dbReference type="InterPro" id="IPR011907">
    <property type="entry name" value="RNase_III"/>
</dbReference>
<dbReference type="InterPro" id="IPR000999">
    <property type="entry name" value="RNase_III_dom"/>
</dbReference>
<dbReference type="InterPro" id="IPR036389">
    <property type="entry name" value="RNase_III_sf"/>
</dbReference>
<dbReference type="NCBIfam" id="TIGR02191">
    <property type="entry name" value="RNaseIII"/>
    <property type="match status" value="1"/>
</dbReference>
<dbReference type="PANTHER" id="PTHR11207:SF0">
    <property type="entry name" value="RIBONUCLEASE 3"/>
    <property type="match status" value="1"/>
</dbReference>
<dbReference type="PANTHER" id="PTHR11207">
    <property type="entry name" value="RIBONUCLEASE III"/>
    <property type="match status" value="1"/>
</dbReference>
<dbReference type="Pfam" id="PF00035">
    <property type="entry name" value="dsrm"/>
    <property type="match status" value="1"/>
</dbReference>
<dbReference type="Pfam" id="PF14622">
    <property type="entry name" value="Ribonucleas_3_3"/>
    <property type="match status" value="1"/>
</dbReference>
<dbReference type="SMART" id="SM00358">
    <property type="entry name" value="DSRM"/>
    <property type="match status" value="1"/>
</dbReference>
<dbReference type="SMART" id="SM00535">
    <property type="entry name" value="RIBOc"/>
    <property type="match status" value="1"/>
</dbReference>
<dbReference type="SUPFAM" id="SSF54768">
    <property type="entry name" value="dsRNA-binding domain-like"/>
    <property type="match status" value="1"/>
</dbReference>
<dbReference type="SUPFAM" id="SSF69065">
    <property type="entry name" value="RNase III domain-like"/>
    <property type="match status" value="1"/>
</dbReference>
<dbReference type="PROSITE" id="PS50137">
    <property type="entry name" value="DS_RBD"/>
    <property type="match status" value="1"/>
</dbReference>
<dbReference type="PROSITE" id="PS00517">
    <property type="entry name" value="RNASE_3_1"/>
    <property type="match status" value="1"/>
</dbReference>
<dbReference type="PROSITE" id="PS50142">
    <property type="entry name" value="RNASE_3_2"/>
    <property type="match status" value="1"/>
</dbReference>
<gene>
    <name evidence="1" type="primary">rnc</name>
    <name type="ordered locus">BQ2027_MB2950C</name>
</gene>
<name>RNC_MYCBO</name>
<sequence length="240" mass="25399">MIRSRQPLLDALGVDLPDELLSLALTHRSYAYENGGLPTNERLEFLGDAVLGLTITDALFHRHPDRSEGDLAKLRASVVNTQALADVARRLCAEGLGVHVLLGRGEANTGGADKSSILADGMESLLGAIYLQHGMEKAREVILRLFGPLLDAAPTLGAGLDWKTSLQELTAARGLGAPSYLVTSTGPDHDKEFTAVVVVMDSEYGSGVGRSKKEAEQKAAAAAWKALEVLDNAMPGKTSA</sequence>
<keyword id="KW-0963">Cytoplasm</keyword>
<keyword id="KW-0255">Endonuclease</keyword>
<keyword id="KW-0378">Hydrolase</keyword>
<keyword id="KW-0460">Magnesium</keyword>
<keyword id="KW-0479">Metal-binding</keyword>
<keyword id="KW-0507">mRNA processing</keyword>
<keyword id="KW-0540">Nuclease</keyword>
<keyword id="KW-1185">Reference proteome</keyword>
<keyword id="KW-0694">RNA-binding</keyword>
<keyword id="KW-0698">rRNA processing</keyword>
<keyword id="KW-0699">rRNA-binding</keyword>
<keyword id="KW-0819">tRNA processing</keyword>
<feature type="chain" id="PRO_0000180414" description="Ribonuclease 3">
    <location>
        <begin position="1"/>
        <end position="240"/>
    </location>
</feature>
<feature type="domain" description="RNase III" evidence="1">
    <location>
        <begin position="4"/>
        <end position="134"/>
    </location>
</feature>
<feature type="domain" description="DRBM" evidence="1">
    <location>
        <begin position="161"/>
        <end position="229"/>
    </location>
</feature>
<feature type="active site" evidence="1">
    <location>
        <position position="48"/>
    </location>
</feature>
<feature type="active site" evidence="1">
    <location>
        <position position="123"/>
    </location>
</feature>
<feature type="binding site" evidence="1">
    <location>
        <position position="44"/>
    </location>
    <ligand>
        <name>Mg(2+)</name>
        <dbReference type="ChEBI" id="CHEBI:18420"/>
    </ligand>
</feature>
<feature type="binding site" evidence="1">
    <location>
        <position position="120"/>
    </location>
    <ligand>
        <name>Mg(2+)</name>
        <dbReference type="ChEBI" id="CHEBI:18420"/>
    </ligand>
</feature>
<feature type="binding site" evidence="1">
    <location>
        <position position="123"/>
    </location>
    <ligand>
        <name>Mg(2+)</name>
        <dbReference type="ChEBI" id="CHEBI:18420"/>
    </ligand>
</feature>
<comment type="function">
    <text evidence="1">Digests double-stranded RNA. Involved in the processing of primary rRNA transcript to yield the immediate precursors to the large and small rRNAs (23S and 16S). Processes some mRNAs, and tRNAs when they are encoded in the rRNA operon. Processes pre-crRNA and tracrRNA of type II CRISPR loci if present in the organism.</text>
</comment>
<comment type="catalytic activity">
    <reaction evidence="1">
        <text>Endonucleolytic cleavage to 5'-phosphomonoester.</text>
        <dbReference type="EC" id="3.1.26.3"/>
    </reaction>
</comment>
<comment type="cofactor">
    <cofactor evidence="1">
        <name>Mg(2+)</name>
        <dbReference type="ChEBI" id="CHEBI:18420"/>
    </cofactor>
</comment>
<comment type="subunit">
    <text evidence="1">Homodimer.</text>
</comment>
<comment type="subcellular location">
    <subcellularLocation>
        <location evidence="1">Cytoplasm</location>
    </subcellularLocation>
</comment>
<comment type="similarity">
    <text evidence="1">Belongs to the ribonuclease III family.</text>
</comment>
<accession>P66667</accession>
<accession>A0A1R3Y2L9</accession>
<accession>Q10962</accession>
<accession>X2BLW8</accession>
<evidence type="ECO:0000255" key="1">
    <source>
        <dbReference type="HAMAP-Rule" id="MF_00104"/>
    </source>
</evidence>
<proteinExistence type="inferred from homology"/>
<organism>
    <name type="scientific">Mycobacterium bovis (strain ATCC BAA-935 / AF2122/97)</name>
    <dbReference type="NCBI Taxonomy" id="233413"/>
    <lineage>
        <taxon>Bacteria</taxon>
        <taxon>Bacillati</taxon>
        <taxon>Actinomycetota</taxon>
        <taxon>Actinomycetes</taxon>
        <taxon>Mycobacteriales</taxon>
        <taxon>Mycobacteriaceae</taxon>
        <taxon>Mycobacterium</taxon>
        <taxon>Mycobacterium tuberculosis complex</taxon>
    </lineage>
</organism>
<reference key="1">
    <citation type="journal article" date="2003" name="Proc. Natl. Acad. Sci. U.S.A.">
        <title>The complete genome sequence of Mycobacterium bovis.</title>
        <authorList>
            <person name="Garnier T."/>
            <person name="Eiglmeier K."/>
            <person name="Camus J.-C."/>
            <person name="Medina N."/>
            <person name="Mansoor H."/>
            <person name="Pryor M."/>
            <person name="Duthoy S."/>
            <person name="Grondin S."/>
            <person name="Lacroix C."/>
            <person name="Monsempe C."/>
            <person name="Simon S."/>
            <person name="Harris B."/>
            <person name="Atkin R."/>
            <person name="Doggett J."/>
            <person name="Mayes R."/>
            <person name="Keating L."/>
            <person name="Wheeler P.R."/>
            <person name="Parkhill J."/>
            <person name="Barrell B.G."/>
            <person name="Cole S.T."/>
            <person name="Gordon S.V."/>
            <person name="Hewinson R.G."/>
        </authorList>
    </citation>
    <scope>NUCLEOTIDE SEQUENCE [LARGE SCALE GENOMIC DNA]</scope>
    <source>
        <strain>ATCC BAA-935 / AF2122/97</strain>
    </source>
</reference>
<reference key="2">
    <citation type="journal article" date="2017" name="Genome Announc.">
        <title>Updated reference genome sequence and annotation of Mycobacterium bovis AF2122/97.</title>
        <authorList>
            <person name="Malone K.M."/>
            <person name="Farrell D."/>
            <person name="Stuber T.P."/>
            <person name="Schubert O.T."/>
            <person name="Aebersold R."/>
            <person name="Robbe-Austerman S."/>
            <person name="Gordon S.V."/>
        </authorList>
    </citation>
    <scope>NUCLEOTIDE SEQUENCE [LARGE SCALE GENOMIC DNA]</scope>
    <scope>GENOME REANNOTATION</scope>
    <source>
        <strain>ATCC BAA-935 / AF2122/97</strain>
    </source>
</reference>
<protein>
    <recommendedName>
        <fullName evidence="1">Ribonuclease 3</fullName>
        <ecNumber evidence="1">3.1.26.3</ecNumber>
    </recommendedName>
    <alternativeName>
        <fullName evidence="1">Ribonuclease III</fullName>
        <shortName evidence="1">RNase III</shortName>
    </alternativeName>
</protein>